<keyword id="KW-0050">Antiport</keyword>
<keyword id="KW-0997">Cell inner membrane</keyword>
<keyword id="KW-1003">Cell membrane</keyword>
<keyword id="KW-0406">Ion transport</keyword>
<keyword id="KW-0472">Membrane</keyword>
<keyword id="KW-0915">Sodium</keyword>
<keyword id="KW-0739">Sodium transport</keyword>
<keyword id="KW-0812">Transmembrane</keyword>
<keyword id="KW-1133">Transmembrane helix</keyword>
<keyword id="KW-0813">Transport</keyword>
<sequence>MTVLRSMKDFSSMNITASILLFVTAIAAAVIANSPAASVYQEFLSHELHFRIGGFNLLSHAGHNLTMIEFINDGLMTIFFLMVGLEIKRELLVGELSSFRKAALPFIAACGGMVVPVVIYSMVCAPGTEGGQGLAIPMATDIAFSLGVLSLLGKRVPLSLKIFLTAFAVVDDIGGILVIAIFYSSHVAYEYLLWAALLYVLLYFIGKKGATNKIFFLVVGVVIWYLFLQSGIHSTISGVILAFVIPAKPQLNVGTYIERIRRIISTFPEMGANNIVLTNQQIAKLKEVESASDRVISPLQSLEDNLHGAVNYLVLPLFAFVNAGVMFSGEGEVIGGVTLAVALGLLAGKFLGIYSFTWLAVKSGLTPMPLGMNWKNISGVALLGGIGFTVSLFIANLSFGSAHPVLLNQAKLGVLSGTVMAGILGYLVLHWVLPKRR</sequence>
<gene>
    <name evidence="1" type="primary">nhaA</name>
    <name type="ordered locus">BF2579</name>
</gene>
<reference key="1">
    <citation type="journal article" date="2005" name="Science">
        <title>Extensive DNA inversions in the B. fragilis genome control variable gene expression.</title>
        <authorList>
            <person name="Cerdeno-Tarraga A.-M."/>
            <person name="Patrick S."/>
            <person name="Crossman L.C."/>
            <person name="Blakely G."/>
            <person name="Abratt V."/>
            <person name="Lennard N."/>
            <person name="Poxton I."/>
            <person name="Duerden B."/>
            <person name="Harris B."/>
            <person name="Quail M.A."/>
            <person name="Barron A."/>
            <person name="Clark L."/>
            <person name="Corton C."/>
            <person name="Doggett J."/>
            <person name="Holden M.T.G."/>
            <person name="Larke N."/>
            <person name="Line A."/>
            <person name="Lord A."/>
            <person name="Norbertczak H."/>
            <person name="Ormond D."/>
            <person name="Price C."/>
            <person name="Rabbinowitsch E."/>
            <person name="Woodward J."/>
            <person name="Barrell B.G."/>
            <person name="Parkhill J."/>
        </authorList>
    </citation>
    <scope>NUCLEOTIDE SEQUENCE [LARGE SCALE GENOMIC DNA]</scope>
    <source>
        <strain>ATCC 25285 / DSM 2151 / CCUG 4856 / JCM 11019 / LMG 10263 / NCTC 9343 / Onslow / VPI 2553 / EN-2</strain>
    </source>
</reference>
<dbReference type="EMBL" id="CR626927">
    <property type="protein sequence ID" value="CAH08279.1"/>
    <property type="molecule type" value="Genomic_DNA"/>
</dbReference>
<dbReference type="RefSeq" id="WP_010993066.1">
    <property type="nucleotide sequence ID" value="NZ_UFTH01000001.1"/>
</dbReference>
<dbReference type="SMR" id="Q5LC87"/>
<dbReference type="PaxDb" id="272559-BF9343_2498"/>
<dbReference type="GeneID" id="60366803"/>
<dbReference type="KEGG" id="bfs:BF9343_2498"/>
<dbReference type="eggNOG" id="COG3004">
    <property type="taxonomic scope" value="Bacteria"/>
</dbReference>
<dbReference type="HOGENOM" id="CLU_015803_1_2_10"/>
<dbReference type="BioCyc" id="BFRA272559:G1GHZ-2717-MONOMER"/>
<dbReference type="Proteomes" id="UP000006731">
    <property type="component" value="Chromosome"/>
</dbReference>
<dbReference type="GO" id="GO:0005886">
    <property type="term" value="C:plasma membrane"/>
    <property type="evidence" value="ECO:0007669"/>
    <property type="project" value="UniProtKB-SubCell"/>
</dbReference>
<dbReference type="GO" id="GO:0015385">
    <property type="term" value="F:sodium:proton antiporter activity"/>
    <property type="evidence" value="ECO:0007669"/>
    <property type="project" value="TreeGrafter"/>
</dbReference>
<dbReference type="GO" id="GO:0006885">
    <property type="term" value="P:regulation of pH"/>
    <property type="evidence" value="ECO:0007669"/>
    <property type="project" value="InterPro"/>
</dbReference>
<dbReference type="Gene3D" id="1.20.1530.10">
    <property type="entry name" value="Na+/H+ antiporter like domain"/>
    <property type="match status" value="1"/>
</dbReference>
<dbReference type="HAMAP" id="MF_01844">
    <property type="entry name" value="NhaA"/>
    <property type="match status" value="1"/>
</dbReference>
<dbReference type="InterPro" id="IPR023171">
    <property type="entry name" value="Na/H_antiporter_dom_sf"/>
</dbReference>
<dbReference type="InterPro" id="IPR004670">
    <property type="entry name" value="NhaA"/>
</dbReference>
<dbReference type="NCBIfam" id="TIGR00773">
    <property type="entry name" value="NhaA"/>
    <property type="match status" value="1"/>
</dbReference>
<dbReference type="PANTHER" id="PTHR30341:SF0">
    <property type="entry name" value="NA(+)_H(+) ANTIPORTER NHAA"/>
    <property type="match status" value="1"/>
</dbReference>
<dbReference type="PANTHER" id="PTHR30341">
    <property type="entry name" value="SODIUM ION/PROTON ANTIPORTER NHAA-RELATED"/>
    <property type="match status" value="1"/>
</dbReference>
<dbReference type="Pfam" id="PF06965">
    <property type="entry name" value="Na_H_antiport_1"/>
    <property type="match status" value="1"/>
</dbReference>
<evidence type="ECO:0000255" key="1">
    <source>
        <dbReference type="HAMAP-Rule" id="MF_01844"/>
    </source>
</evidence>
<accession>Q5LC87</accession>
<comment type="function">
    <text evidence="1">Na(+)/H(+) antiporter that extrudes sodium in exchange for external protons.</text>
</comment>
<comment type="catalytic activity">
    <reaction evidence="1">
        <text>Na(+)(in) + 2 H(+)(out) = Na(+)(out) + 2 H(+)(in)</text>
        <dbReference type="Rhea" id="RHEA:29251"/>
        <dbReference type="ChEBI" id="CHEBI:15378"/>
        <dbReference type="ChEBI" id="CHEBI:29101"/>
    </reaction>
    <physiologicalReaction direction="left-to-right" evidence="1">
        <dbReference type="Rhea" id="RHEA:29252"/>
    </physiologicalReaction>
</comment>
<comment type="subcellular location">
    <subcellularLocation>
        <location evidence="1">Cell inner membrane</location>
        <topology evidence="1">Multi-pass membrane protein</topology>
    </subcellularLocation>
</comment>
<comment type="similarity">
    <text evidence="1">Belongs to the NhaA Na(+)/H(+) (TC 2.A.33) antiporter family.</text>
</comment>
<protein>
    <recommendedName>
        <fullName evidence="1">Na(+)/H(+) antiporter NhaA</fullName>
    </recommendedName>
    <alternativeName>
        <fullName evidence="1">Sodium/proton antiporter NhaA</fullName>
    </alternativeName>
</protein>
<proteinExistence type="inferred from homology"/>
<organism>
    <name type="scientific">Bacteroides fragilis (strain ATCC 25285 / DSM 2151 / CCUG 4856 / JCM 11019 / LMG 10263 / NCTC 9343 / Onslow / VPI 2553 / EN-2)</name>
    <dbReference type="NCBI Taxonomy" id="272559"/>
    <lineage>
        <taxon>Bacteria</taxon>
        <taxon>Pseudomonadati</taxon>
        <taxon>Bacteroidota</taxon>
        <taxon>Bacteroidia</taxon>
        <taxon>Bacteroidales</taxon>
        <taxon>Bacteroidaceae</taxon>
        <taxon>Bacteroides</taxon>
    </lineage>
</organism>
<name>NHAA_BACFN</name>
<feature type="chain" id="PRO_0000334232" description="Na(+)/H(+) antiporter NhaA">
    <location>
        <begin position="1"/>
        <end position="437"/>
    </location>
</feature>
<feature type="transmembrane region" description="Helical" evidence="1">
    <location>
        <begin position="12"/>
        <end position="32"/>
    </location>
</feature>
<feature type="transmembrane region" description="Helical" evidence="1">
    <location>
        <begin position="65"/>
        <end position="85"/>
    </location>
</feature>
<feature type="transmembrane region" description="Helical" evidence="1">
    <location>
        <begin position="103"/>
        <end position="123"/>
    </location>
</feature>
<feature type="transmembrane region" description="Helical" evidence="1">
    <location>
        <begin position="133"/>
        <end position="153"/>
    </location>
</feature>
<feature type="transmembrane region" description="Helical" evidence="1">
    <location>
        <begin position="162"/>
        <end position="182"/>
    </location>
</feature>
<feature type="transmembrane region" description="Helical" evidence="1">
    <location>
        <begin position="186"/>
        <end position="206"/>
    </location>
</feature>
<feature type="transmembrane region" description="Helical" evidence="1">
    <location>
        <begin position="214"/>
        <end position="234"/>
    </location>
</feature>
<feature type="transmembrane region" description="Helical" evidence="1">
    <location>
        <begin position="308"/>
        <end position="328"/>
    </location>
</feature>
<feature type="transmembrane region" description="Helical" evidence="1">
    <location>
        <begin position="333"/>
        <end position="353"/>
    </location>
</feature>
<feature type="transmembrane region" description="Helical" evidence="1">
    <location>
        <begin position="377"/>
        <end position="397"/>
    </location>
</feature>
<feature type="transmembrane region" description="Helical" evidence="1">
    <location>
        <begin position="412"/>
        <end position="432"/>
    </location>
</feature>